<name>GSA_XYLFM</name>
<evidence type="ECO:0000255" key="1">
    <source>
        <dbReference type="HAMAP-Rule" id="MF_00375"/>
    </source>
</evidence>
<accession>B0U328</accession>
<feature type="chain" id="PRO_1000121932" description="Glutamate-1-semialdehyde 2,1-aminomutase">
    <location>
        <begin position="1"/>
        <end position="444"/>
    </location>
</feature>
<feature type="modified residue" description="N6-(pyridoxal phosphate)lysine" evidence="1">
    <location>
        <position position="267"/>
    </location>
</feature>
<protein>
    <recommendedName>
        <fullName evidence="1">Glutamate-1-semialdehyde 2,1-aminomutase</fullName>
        <shortName evidence="1">GSA</shortName>
        <ecNumber evidence="1">5.4.3.8</ecNumber>
    </recommendedName>
    <alternativeName>
        <fullName evidence="1">Glutamate-1-semialdehyde aminotransferase</fullName>
        <shortName evidence="1">GSA-AT</shortName>
    </alternativeName>
</protein>
<comment type="catalytic activity">
    <reaction evidence="1">
        <text>(S)-4-amino-5-oxopentanoate = 5-aminolevulinate</text>
        <dbReference type="Rhea" id="RHEA:14265"/>
        <dbReference type="ChEBI" id="CHEBI:57501"/>
        <dbReference type="ChEBI" id="CHEBI:356416"/>
        <dbReference type="EC" id="5.4.3.8"/>
    </reaction>
</comment>
<comment type="cofactor">
    <cofactor evidence="1">
        <name>pyridoxal 5'-phosphate</name>
        <dbReference type="ChEBI" id="CHEBI:597326"/>
    </cofactor>
</comment>
<comment type="pathway">
    <text evidence="1">Porphyrin-containing compound metabolism; protoporphyrin-IX biosynthesis; 5-aminolevulinate from L-glutamyl-tRNA(Glu): step 2/2.</text>
</comment>
<comment type="subunit">
    <text evidence="1">Homodimer.</text>
</comment>
<comment type="subcellular location">
    <subcellularLocation>
        <location evidence="1">Cytoplasm</location>
    </subcellularLocation>
</comment>
<comment type="similarity">
    <text evidence="1">Belongs to the class-III pyridoxal-phosphate-dependent aminotransferase family. HemL subfamily.</text>
</comment>
<keyword id="KW-0963">Cytoplasm</keyword>
<keyword id="KW-0413">Isomerase</keyword>
<keyword id="KW-0627">Porphyrin biosynthesis</keyword>
<keyword id="KW-0663">Pyridoxal phosphate</keyword>
<gene>
    <name evidence="1" type="primary">hemL</name>
    <name type="ordered locus">Xfasm12_1325</name>
</gene>
<reference key="1">
    <citation type="journal article" date="2010" name="J. Bacteriol.">
        <title>Whole genome sequences of two Xylella fastidiosa strains (M12 and M23) causing almond leaf scorch disease in California.</title>
        <authorList>
            <person name="Chen J."/>
            <person name="Xie G."/>
            <person name="Han S."/>
            <person name="Chertkov O."/>
            <person name="Sims D."/>
            <person name="Civerolo E.L."/>
        </authorList>
    </citation>
    <scope>NUCLEOTIDE SEQUENCE [LARGE SCALE GENOMIC DNA]</scope>
    <source>
        <strain>M12</strain>
    </source>
</reference>
<organism>
    <name type="scientific">Xylella fastidiosa (strain M12)</name>
    <dbReference type="NCBI Taxonomy" id="405440"/>
    <lineage>
        <taxon>Bacteria</taxon>
        <taxon>Pseudomonadati</taxon>
        <taxon>Pseudomonadota</taxon>
        <taxon>Gammaproteobacteria</taxon>
        <taxon>Lysobacterales</taxon>
        <taxon>Lysobacteraceae</taxon>
        <taxon>Xylella</taxon>
    </lineage>
</organism>
<sequence length="444" mass="47114">MNHSRSHALFVQAQTRIPGGVNSPVRAFRSVGGEPFFVARADGPYLFDVDGHRYIDYVGSWGPMIVGHNHPGVREAVQVAISNGLSYGAPCAAEVTMAETIARLVPSCQMVRMVNSGTEATLSAIRLARGATGRNYIVKFEGCYHGHGDSFLVKGGSGMLTLGLPSSPGVPAELSKLTITLTYNDFDAATALFEEMGHHIAAVIVEPVIGNANCIPPRPGYLQHLRTLCTQYGVLLIFDEVMTGFRVALGGAQALYGVTPDLTTFGKIIGGGMPVGAYGGRRDLMQHIAPAGPIYQAGTLSGNPVAMAAGLAMLELIQAPDFYTHLSNAAAALCTGLQQAASQAGIAMTTQQIGGMFGLFFTDQQVETYAQATACNTDRFNRFFHAMLQRGVFFAPSAYEAGFISSAHSPNIIEATLEAARTAFQTIANEAAILSKSETPIKMR</sequence>
<proteinExistence type="inferred from homology"/>
<dbReference type="EC" id="5.4.3.8" evidence="1"/>
<dbReference type="EMBL" id="CP000941">
    <property type="protein sequence ID" value="ACA12257.1"/>
    <property type="molecule type" value="Genomic_DNA"/>
</dbReference>
<dbReference type="RefSeq" id="WP_004085701.1">
    <property type="nucleotide sequence ID" value="NC_010513.1"/>
</dbReference>
<dbReference type="SMR" id="B0U328"/>
<dbReference type="KEGG" id="xfm:Xfasm12_1325"/>
<dbReference type="HOGENOM" id="CLU_016922_1_5_6"/>
<dbReference type="UniPathway" id="UPA00251">
    <property type="reaction ID" value="UER00317"/>
</dbReference>
<dbReference type="GO" id="GO:0005737">
    <property type="term" value="C:cytoplasm"/>
    <property type="evidence" value="ECO:0007669"/>
    <property type="project" value="UniProtKB-SubCell"/>
</dbReference>
<dbReference type="GO" id="GO:0042286">
    <property type="term" value="F:glutamate-1-semialdehyde 2,1-aminomutase activity"/>
    <property type="evidence" value="ECO:0007669"/>
    <property type="project" value="UniProtKB-UniRule"/>
</dbReference>
<dbReference type="GO" id="GO:0030170">
    <property type="term" value="F:pyridoxal phosphate binding"/>
    <property type="evidence" value="ECO:0007669"/>
    <property type="project" value="InterPro"/>
</dbReference>
<dbReference type="GO" id="GO:0008483">
    <property type="term" value="F:transaminase activity"/>
    <property type="evidence" value="ECO:0007669"/>
    <property type="project" value="InterPro"/>
</dbReference>
<dbReference type="GO" id="GO:0006782">
    <property type="term" value="P:protoporphyrinogen IX biosynthetic process"/>
    <property type="evidence" value="ECO:0007669"/>
    <property type="project" value="UniProtKB-UniRule"/>
</dbReference>
<dbReference type="CDD" id="cd00610">
    <property type="entry name" value="OAT_like"/>
    <property type="match status" value="1"/>
</dbReference>
<dbReference type="FunFam" id="3.40.640.10:FF:000021">
    <property type="entry name" value="Glutamate-1-semialdehyde 2,1-aminomutase"/>
    <property type="match status" value="1"/>
</dbReference>
<dbReference type="Gene3D" id="3.90.1150.10">
    <property type="entry name" value="Aspartate Aminotransferase, domain 1"/>
    <property type="match status" value="1"/>
</dbReference>
<dbReference type="Gene3D" id="3.40.640.10">
    <property type="entry name" value="Type I PLP-dependent aspartate aminotransferase-like (Major domain)"/>
    <property type="match status" value="1"/>
</dbReference>
<dbReference type="HAMAP" id="MF_00375">
    <property type="entry name" value="HemL_aminotrans_3"/>
    <property type="match status" value="1"/>
</dbReference>
<dbReference type="InterPro" id="IPR004639">
    <property type="entry name" value="4pyrrol_synth_GluAld_NH2Trfase"/>
</dbReference>
<dbReference type="InterPro" id="IPR005814">
    <property type="entry name" value="Aminotrans_3"/>
</dbReference>
<dbReference type="InterPro" id="IPR049704">
    <property type="entry name" value="Aminotrans_3_PPA_site"/>
</dbReference>
<dbReference type="InterPro" id="IPR015424">
    <property type="entry name" value="PyrdxlP-dep_Trfase"/>
</dbReference>
<dbReference type="InterPro" id="IPR015421">
    <property type="entry name" value="PyrdxlP-dep_Trfase_major"/>
</dbReference>
<dbReference type="InterPro" id="IPR015422">
    <property type="entry name" value="PyrdxlP-dep_Trfase_small"/>
</dbReference>
<dbReference type="NCBIfam" id="TIGR00713">
    <property type="entry name" value="hemL"/>
    <property type="match status" value="1"/>
</dbReference>
<dbReference type="NCBIfam" id="NF000818">
    <property type="entry name" value="PRK00062.1"/>
    <property type="match status" value="1"/>
</dbReference>
<dbReference type="PANTHER" id="PTHR43713">
    <property type="entry name" value="GLUTAMATE-1-SEMIALDEHYDE 2,1-AMINOMUTASE"/>
    <property type="match status" value="1"/>
</dbReference>
<dbReference type="PANTHER" id="PTHR43713:SF3">
    <property type="entry name" value="GLUTAMATE-1-SEMIALDEHYDE 2,1-AMINOMUTASE 1, CHLOROPLASTIC-RELATED"/>
    <property type="match status" value="1"/>
</dbReference>
<dbReference type="Pfam" id="PF00202">
    <property type="entry name" value="Aminotran_3"/>
    <property type="match status" value="1"/>
</dbReference>
<dbReference type="SUPFAM" id="SSF53383">
    <property type="entry name" value="PLP-dependent transferases"/>
    <property type="match status" value="1"/>
</dbReference>
<dbReference type="PROSITE" id="PS00600">
    <property type="entry name" value="AA_TRANSFER_CLASS_3"/>
    <property type="match status" value="1"/>
</dbReference>